<comment type="function">
    <text evidence="1">RuBisCO catalyzes two reactions: the carboxylation of D-ribulose 1,5-bisphosphate, the primary event in carbon dioxide fixation, as well as the oxidative fragmentation of the pentose substrate in the photorespiration process. Both reactions occur simultaneously and in competition at the same active site.</text>
</comment>
<comment type="catalytic activity">
    <reaction evidence="1">
        <text>2 (2R)-3-phosphoglycerate + 2 H(+) = D-ribulose 1,5-bisphosphate + CO2 + H2O</text>
        <dbReference type="Rhea" id="RHEA:23124"/>
        <dbReference type="ChEBI" id="CHEBI:15377"/>
        <dbReference type="ChEBI" id="CHEBI:15378"/>
        <dbReference type="ChEBI" id="CHEBI:16526"/>
        <dbReference type="ChEBI" id="CHEBI:57870"/>
        <dbReference type="ChEBI" id="CHEBI:58272"/>
        <dbReference type="EC" id="4.1.1.39"/>
    </reaction>
</comment>
<comment type="catalytic activity">
    <reaction evidence="1">
        <text>D-ribulose 1,5-bisphosphate + O2 = 2-phosphoglycolate + (2R)-3-phosphoglycerate + 2 H(+)</text>
        <dbReference type="Rhea" id="RHEA:36631"/>
        <dbReference type="ChEBI" id="CHEBI:15378"/>
        <dbReference type="ChEBI" id="CHEBI:15379"/>
        <dbReference type="ChEBI" id="CHEBI:57870"/>
        <dbReference type="ChEBI" id="CHEBI:58033"/>
        <dbReference type="ChEBI" id="CHEBI:58272"/>
    </reaction>
</comment>
<comment type="cofactor">
    <cofactor evidence="1">
        <name>Mg(2+)</name>
        <dbReference type="ChEBI" id="CHEBI:18420"/>
    </cofactor>
    <text evidence="1">Binds 1 Mg(2+) ion per subunit.</text>
</comment>
<comment type="subunit">
    <text evidence="1">Heterohexadecamer of 8 large chains and 8 small chains; disulfide-linked. The disulfide link is formed within the large subunit homodimers.</text>
</comment>
<comment type="subcellular location">
    <subcellularLocation>
        <location>Plastid</location>
        <location>Chloroplast</location>
    </subcellularLocation>
</comment>
<comment type="PTM">
    <text evidence="1">The disulfide bond which can form in the large chain dimeric partners within the hexadecamer appears to be associated with oxidative stress and protein turnover.</text>
</comment>
<comment type="miscellaneous">
    <text evidence="1">The basic functional RuBisCO is composed of a large chain homodimer in a 'head-to-tail' conformation. In form I RuBisCO this homodimer is arranged in a barrel-like tetramer with the small subunits forming a tetrameric 'cap' on each end of the 'barrel'.</text>
</comment>
<comment type="similarity">
    <text evidence="1">Belongs to the RuBisCO large chain family. Type I subfamily.</text>
</comment>
<reference key="1">
    <citation type="journal article" date="1995" name="J. Mol. Evol.">
        <title>Comparison of the evolution of ribulose-1, 5-biphosphate carboxylase (rbcL) and atpB-rbcL noncoding spacer sequences in a recent plant group, the tribe Rubieae (Rubiaceae).</title>
        <authorList>
            <person name="Manen J.F."/>
            <person name="Natali A."/>
        </authorList>
    </citation>
    <scope>NUCLEOTIDE SEQUENCE [GENOMIC DNA]</scope>
</reference>
<accession>Q32908</accession>
<dbReference type="EC" id="4.1.1.39" evidence="1"/>
<dbReference type="EMBL" id="X81103">
    <property type="protein sequence ID" value="CAA57009.1"/>
    <property type="molecule type" value="Genomic_DNA"/>
</dbReference>
<dbReference type="PIR" id="S47235">
    <property type="entry name" value="S47235"/>
</dbReference>
<dbReference type="SMR" id="Q32908"/>
<dbReference type="GO" id="GO:0009507">
    <property type="term" value="C:chloroplast"/>
    <property type="evidence" value="ECO:0007669"/>
    <property type="project" value="UniProtKB-SubCell"/>
</dbReference>
<dbReference type="GO" id="GO:0000287">
    <property type="term" value="F:magnesium ion binding"/>
    <property type="evidence" value="ECO:0007669"/>
    <property type="project" value="InterPro"/>
</dbReference>
<dbReference type="GO" id="GO:0004497">
    <property type="term" value="F:monooxygenase activity"/>
    <property type="evidence" value="ECO:0007669"/>
    <property type="project" value="UniProtKB-KW"/>
</dbReference>
<dbReference type="GO" id="GO:0016984">
    <property type="term" value="F:ribulose-bisphosphate carboxylase activity"/>
    <property type="evidence" value="ECO:0007669"/>
    <property type="project" value="UniProtKB-EC"/>
</dbReference>
<dbReference type="GO" id="GO:0009853">
    <property type="term" value="P:photorespiration"/>
    <property type="evidence" value="ECO:0007669"/>
    <property type="project" value="UniProtKB-KW"/>
</dbReference>
<dbReference type="GO" id="GO:0019253">
    <property type="term" value="P:reductive pentose-phosphate cycle"/>
    <property type="evidence" value="ECO:0007669"/>
    <property type="project" value="UniProtKB-KW"/>
</dbReference>
<dbReference type="CDD" id="cd08212">
    <property type="entry name" value="RuBisCO_large_I"/>
    <property type="match status" value="1"/>
</dbReference>
<dbReference type="FunFam" id="3.20.20.110:FF:000003">
    <property type="entry name" value="Ribulose bisphosphate carboxylase large chain"/>
    <property type="match status" value="1"/>
</dbReference>
<dbReference type="FunFam" id="3.30.70.150:FF:000001">
    <property type="entry name" value="Ribulose bisphosphate carboxylase large chain"/>
    <property type="match status" value="1"/>
</dbReference>
<dbReference type="Gene3D" id="3.20.20.110">
    <property type="entry name" value="Ribulose bisphosphate carboxylase, large subunit, C-terminal domain"/>
    <property type="match status" value="1"/>
</dbReference>
<dbReference type="Gene3D" id="3.30.70.150">
    <property type="entry name" value="RuBisCO large subunit, N-terminal domain"/>
    <property type="match status" value="1"/>
</dbReference>
<dbReference type="HAMAP" id="MF_01338">
    <property type="entry name" value="RuBisCO_L_type1"/>
    <property type="match status" value="1"/>
</dbReference>
<dbReference type="InterPro" id="IPR033966">
    <property type="entry name" value="RuBisCO"/>
</dbReference>
<dbReference type="InterPro" id="IPR020878">
    <property type="entry name" value="RuBisCo_large_chain_AS"/>
</dbReference>
<dbReference type="InterPro" id="IPR000685">
    <property type="entry name" value="RuBisCO_lsu_C"/>
</dbReference>
<dbReference type="InterPro" id="IPR036376">
    <property type="entry name" value="RuBisCO_lsu_C_sf"/>
</dbReference>
<dbReference type="InterPro" id="IPR017443">
    <property type="entry name" value="RuBisCO_lsu_fd_N"/>
</dbReference>
<dbReference type="InterPro" id="IPR036422">
    <property type="entry name" value="RuBisCO_lsu_N_sf"/>
</dbReference>
<dbReference type="InterPro" id="IPR020888">
    <property type="entry name" value="RuBisCO_lsuI"/>
</dbReference>
<dbReference type="NCBIfam" id="NF003252">
    <property type="entry name" value="PRK04208.1"/>
    <property type="match status" value="1"/>
</dbReference>
<dbReference type="PANTHER" id="PTHR42704">
    <property type="entry name" value="RIBULOSE BISPHOSPHATE CARBOXYLASE"/>
    <property type="match status" value="1"/>
</dbReference>
<dbReference type="PANTHER" id="PTHR42704:SF15">
    <property type="entry name" value="RIBULOSE BISPHOSPHATE CARBOXYLASE LARGE CHAIN"/>
    <property type="match status" value="1"/>
</dbReference>
<dbReference type="Pfam" id="PF00016">
    <property type="entry name" value="RuBisCO_large"/>
    <property type="match status" value="1"/>
</dbReference>
<dbReference type="Pfam" id="PF02788">
    <property type="entry name" value="RuBisCO_large_N"/>
    <property type="match status" value="1"/>
</dbReference>
<dbReference type="SFLD" id="SFLDG01052">
    <property type="entry name" value="RuBisCO"/>
    <property type="match status" value="1"/>
</dbReference>
<dbReference type="SFLD" id="SFLDS00014">
    <property type="entry name" value="RuBisCO"/>
    <property type="match status" value="1"/>
</dbReference>
<dbReference type="SFLD" id="SFLDG00301">
    <property type="entry name" value="RuBisCO-like_proteins"/>
    <property type="match status" value="1"/>
</dbReference>
<dbReference type="SUPFAM" id="SSF51649">
    <property type="entry name" value="RuBisCo, C-terminal domain"/>
    <property type="match status" value="1"/>
</dbReference>
<dbReference type="SUPFAM" id="SSF54966">
    <property type="entry name" value="RuBisCO, large subunit, small (N-terminal) domain"/>
    <property type="match status" value="1"/>
</dbReference>
<dbReference type="PROSITE" id="PS00157">
    <property type="entry name" value="RUBISCO_LARGE"/>
    <property type="match status" value="1"/>
</dbReference>
<feature type="propeptide" id="PRO_0000031343" evidence="1">
    <location>
        <begin position="1"/>
        <end position="2"/>
    </location>
</feature>
<feature type="chain" id="PRO_0000031344" description="Ribulose bisphosphate carboxylase large chain">
    <location>
        <begin position="3"/>
        <end position="453" status="greater than"/>
    </location>
</feature>
<feature type="active site" description="Proton acceptor" evidence="1">
    <location>
        <position position="175"/>
    </location>
</feature>
<feature type="active site" description="Proton acceptor" evidence="1">
    <location>
        <position position="294"/>
    </location>
</feature>
<feature type="binding site" description="in homodimeric partner" evidence="1">
    <location>
        <position position="123"/>
    </location>
    <ligand>
        <name>substrate</name>
    </ligand>
</feature>
<feature type="binding site" evidence="1">
    <location>
        <position position="173"/>
    </location>
    <ligand>
        <name>substrate</name>
    </ligand>
</feature>
<feature type="binding site" evidence="1">
    <location>
        <position position="177"/>
    </location>
    <ligand>
        <name>substrate</name>
    </ligand>
</feature>
<feature type="binding site" description="via carbamate group" evidence="1">
    <location>
        <position position="201"/>
    </location>
    <ligand>
        <name>Mg(2+)</name>
        <dbReference type="ChEBI" id="CHEBI:18420"/>
    </ligand>
</feature>
<feature type="binding site" evidence="1">
    <location>
        <position position="203"/>
    </location>
    <ligand>
        <name>Mg(2+)</name>
        <dbReference type="ChEBI" id="CHEBI:18420"/>
    </ligand>
</feature>
<feature type="binding site" evidence="1">
    <location>
        <position position="204"/>
    </location>
    <ligand>
        <name>Mg(2+)</name>
        <dbReference type="ChEBI" id="CHEBI:18420"/>
    </ligand>
</feature>
<feature type="binding site" evidence="1">
    <location>
        <position position="295"/>
    </location>
    <ligand>
        <name>substrate</name>
    </ligand>
</feature>
<feature type="binding site" evidence="1">
    <location>
        <position position="327"/>
    </location>
    <ligand>
        <name>substrate</name>
    </ligand>
</feature>
<feature type="binding site" evidence="1">
    <location>
        <position position="379"/>
    </location>
    <ligand>
        <name>substrate</name>
    </ligand>
</feature>
<feature type="site" description="Transition state stabilizer" evidence="1">
    <location>
        <position position="334"/>
    </location>
</feature>
<feature type="modified residue" description="N-acetylproline" evidence="1">
    <location>
        <position position="3"/>
    </location>
</feature>
<feature type="modified residue" description="N6,N6,N6-trimethyllysine" evidence="1">
    <location>
        <position position="14"/>
    </location>
</feature>
<feature type="modified residue" description="N6-carboxylysine" evidence="1">
    <location>
        <position position="201"/>
    </location>
</feature>
<feature type="disulfide bond" description="Interchain; in linked form" evidence="1">
    <location>
        <position position="247"/>
    </location>
</feature>
<feature type="non-terminal residue">
    <location>
        <position position="453"/>
    </location>
</feature>
<evidence type="ECO:0000255" key="1">
    <source>
        <dbReference type="HAMAP-Rule" id="MF_01338"/>
    </source>
</evidence>
<keyword id="KW-0007">Acetylation</keyword>
<keyword id="KW-0113">Calvin cycle</keyword>
<keyword id="KW-0120">Carbon dioxide fixation</keyword>
<keyword id="KW-0150">Chloroplast</keyword>
<keyword id="KW-1015">Disulfide bond</keyword>
<keyword id="KW-0456">Lyase</keyword>
<keyword id="KW-0460">Magnesium</keyword>
<keyword id="KW-0479">Metal-binding</keyword>
<keyword id="KW-0488">Methylation</keyword>
<keyword id="KW-0503">Monooxygenase</keyword>
<keyword id="KW-0560">Oxidoreductase</keyword>
<keyword id="KW-0601">Photorespiration</keyword>
<keyword id="KW-0602">Photosynthesis</keyword>
<keyword id="KW-0934">Plastid</keyword>
<gene>
    <name evidence="1" type="primary">rbcL</name>
</gene>
<protein>
    <recommendedName>
        <fullName evidence="1">Ribulose bisphosphate carboxylase large chain</fullName>
        <shortName evidence="1">RuBisCO large subunit</shortName>
        <ecNumber evidence="1">4.1.1.39</ecNumber>
    </recommendedName>
</protein>
<geneLocation type="chloroplast"/>
<sequence length="453" mass="50293">MSPQTETKAGVGFKAGVNEYKLTYYTPEYETKDTDILAAFRVTPQPGVPPEERGEAVAAESSTGTWTTVWTDGLTSLDRYKGRCYHIEPVPGEEDQFIAYVAYPLDLFEEGSVTNMFTSIVGNVFGFKALRALRLEDLRIPVAYVKTFQGPPHGIQVERDKLNKYGRPLLGCTIKPKLGLSAKNYGRAVYECLRGGLDFTKDDENVNSQPFMRWRDRFLFCAEAIYKSQAETGEIKGHYLNATAGTCEDMMKRAVFARELGVPIVMHDYLTGGFTANTTLAHYCRDNGLLLHIHRAMHAVIDRQKNHGMHFRVLAKALRMSGGDHIHAGTVVGKLEGERDITLGFVDLLRDDYIEKDRSRGIYFTQDWVSLPGVIPVASRGIHVWHMPALTEIFGDDSVLQFGGGTLGHPWGNAPGAVANRVALEACVKARNEGRDLAAEGGEIIREACKWSP</sequence>
<name>RBL_PHUST</name>
<organism>
    <name type="scientific">Phuopsis stylosa</name>
    <name type="common">Caucasian crosswort</name>
    <name type="synonym">Crucianella stylosa</name>
    <dbReference type="NCBI Taxonomy" id="35921"/>
    <lineage>
        <taxon>Eukaryota</taxon>
        <taxon>Viridiplantae</taxon>
        <taxon>Streptophyta</taxon>
        <taxon>Embryophyta</taxon>
        <taxon>Tracheophyta</taxon>
        <taxon>Spermatophyta</taxon>
        <taxon>Magnoliopsida</taxon>
        <taxon>eudicotyledons</taxon>
        <taxon>Gunneridae</taxon>
        <taxon>Pentapetalae</taxon>
        <taxon>asterids</taxon>
        <taxon>lamiids</taxon>
        <taxon>Gentianales</taxon>
        <taxon>Rubiaceae</taxon>
        <taxon>Rubioideae</taxon>
        <taxon>Rubieae</taxon>
        <taxon>Phuopsis</taxon>
    </lineage>
</organism>
<proteinExistence type="inferred from homology"/>